<accession>A0L8Q7</accession>
<name>PYRH_MAGMM</name>
<gene>
    <name evidence="1" type="primary">pyrH</name>
    <name type="ordered locus">Mmc1_1842</name>
</gene>
<keyword id="KW-0067">ATP-binding</keyword>
<keyword id="KW-0963">Cytoplasm</keyword>
<keyword id="KW-0418">Kinase</keyword>
<keyword id="KW-0547">Nucleotide-binding</keyword>
<keyword id="KW-0665">Pyrimidine biosynthesis</keyword>
<keyword id="KW-1185">Reference proteome</keyword>
<keyword id="KW-0808">Transferase</keyword>
<feature type="chain" id="PRO_0000323877" description="Uridylate kinase">
    <location>
        <begin position="1"/>
        <end position="241"/>
    </location>
</feature>
<feature type="binding site" evidence="1">
    <location>
        <begin position="12"/>
        <end position="15"/>
    </location>
    <ligand>
        <name>ATP</name>
        <dbReference type="ChEBI" id="CHEBI:30616"/>
    </ligand>
</feature>
<feature type="binding site" evidence="1">
    <location>
        <position position="54"/>
    </location>
    <ligand>
        <name>UMP</name>
        <dbReference type="ChEBI" id="CHEBI:57865"/>
    </ligand>
</feature>
<feature type="binding site" evidence="1">
    <location>
        <position position="55"/>
    </location>
    <ligand>
        <name>ATP</name>
        <dbReference type="ChEBI" id="CHEBI:30616"/>
    </ligand>
</feature>
<feature type="binding site" evidence="1">
    <location>
        <position position="59"/>
    </location>
    <ligand>
        <name>ATP</name>
        <dbReference type="ChEBI" id="CHEBI:30616"/>
    </ligand>
</feature>
<feature type="binding site" evidence="1">
    <location>
        <position position="74"/>
    </location>
    <ligand>
        <name>UMP</name>
        <dbReference type="ChEBI" id="CHEBI:57865"/>
    </ligand>
</feature>
<feature type="binding site" evidence="1">
    <location>
        <begin position="135"/>
        <end position="142"/>
    </location>
    <ligand>
        <name>UMP</name>
        <dbReference type="ChEBI" id="CHEBI:57865"/>
    </ligand>
</feature>
<feature type="binding site" evidence="1">
    <location>
        <position position="162"/>
    </location>
    <ligand>
        <name>ATP</name>
        <dbReference type="ChEBI" id="CHEBI:30616"/>
    </ligand>
</feature>
<feature type="binding site" evidence="1">
    <location>
        <position position="168"/>
    </location>
    <ligand>
        <name>ATP</name>
        <dbReference type="ChEBI" id="CHEBI:30616"/>
    </ligand>
</feature>
<feature type="binding site" evidence="1">
    <location>
        <position position="171"/>
    </location>
    <ligand>
        <name>ATP</name>
        <dbReference type="ChEBI" id="CHEBI:30616"/>
    </ligand>
</feature>
<reference key="1">
    <citation type="journal article" date="2009" name="Appl. Environ. Microbiol.">
        <title>Complete genome sequence of the chemolithoautotrophic marine magnetotactic coccus strain MC-1.</title>
        <authorList>
            <person name="Schubbe S."/>
            <person name="Williams T.J."/>
            <person name="Xie G."/>
            <person name="Kiss H.E."/>
            <person name="Brettin T.S."/>
            <person name="Martinez D."/>
            <person name="Ross C.A."/>
            <person name="Schuler D."/>
            <person name="Cox B.L."/>
            <person name="Nealson K.H."/>
            <person name="Bazylinski D.A."/>
        </authorList>
    </citation>
    <scope>NUCLEOTIDE SEQUENCE [LARGE SCALE GENOMIC DNA]</scope>
    <source>
        <strain>ATCC BAA-1437 / JCM 17883 / MC-1</strain>
    </source>
</reference>
<proteinExistence type="inferred from homology"/>
<comment type="function">
    <text evidence="1">Catalyzes the reversible phosphorylation of UMP to UDP.</text>
</comment>
<comment type="catalytic activity">
    <reaction evidence="1">
        <text>UMP + ATP = UDP + ADP</text>
        <dbReference type="Rhea" id="RHEA:24400"/>
        <dbReference type="ChEBI" id="CHEBI:30616"/>
        <dbReference type="ChEBI" id="CHEBI:57865"/>
        <dbReference type="ChEBI" id="CHEBI:58223"/>
        <dbReference type="ChEBI" id="CHEBI:456216"/>
        <dbReference type="EC" id="2.7.4.22"/>
    </reaction>
</comment>
<comment type="activity regulation">
    <text evidence="1">Inhibited by UTP.</text>
</comment>
<comment type="pathway">
    <text evidence="1">Pyrimidine metabolism; CTP biosynthesis via de novo pathway; UDP from UMP (UMPK route): step 1/1.</text>
</comment>
<comment type="subunit">
    <text evidence="1">Homohexamer.</text>
</comment>
<comment type="subcellular location">
    <subcellularLocation>
        <location evidence="1">Cytoplasm</location>
    </subcellularLocation>
</comment>
<comment type="similarity">
    <text evidence="1">Belongs to the UMP kinase family.</text>
</comment>
<sequence length="241" mass="26010">MDVARAKRVLLKLSGEALMGEQAYGIAPEFLSYLVEEVQSAIALDIELALVIGGGNIFRGISGSANGMGRTRADQMGMLATVINGLALQSALMLSGTEAVVQTALEMPRVAEPFDHDSAKSHMKQGRVVIFVAGTGNPFFTTDTAAALRACEIEADLLLKATKVDGVYDSDPVKNPKAKRFETLTYHEVLTKNLKVMDMTAITLCRENHIPIGVFSIFERGALTAVLRGEPKATIIEERKE</sequence>
<organism>
    <name type="scientific">Magnetococcus marinus (strain ATCC BAA-1437 / JCM 17883 / MC-1)</name>
    <dbReference type="NCBI Taxonomy" id="156889"/>
    <lineage>
        <taxon>Bacteria</taxon>
        <taxon>Pseudomonadati</taxon>
        <taxon>Pseudomonadota</taxon>
        <taxon>Alphaproteobacteria</taxon>
        <taxon>Magnetococcales</taxon>
        <taxon>Magnetococcaceae</taxon>
        <taxon>Magnetococcus</taxon>
    </lineage>
</organism>
<evidence type="ECO:0000255" key="1">
    <source>
        <dbReference type="HAMAP-Rule" id="MF_01220"/>
    </source>
</evidence>
<dbReference type="EC" id="2.7.4.22" evidence="1"/>
<dbReference type="EMBL" id="CP000471">
    <property type="protein sequence ID" value="ABK44350.1"/>
    <property type="molecule type" value="Genomic_DNA"/>
</dbReference>
<dbReference type="RefSeq" id="WP_011713494.1">
    <property type="nucleotide sequence ID" value="NC_008576.1"/>
</dbReference>
<dbReference type="SMR" id="A0L8Q7"/>
<dbReference type="STRING" id="156889.Mmc1_1842"/>
<dbReference type="KEGG" id="mgm:Mmc1_1842"/>
<dbReference type="eggNOG" id="COG0528">
    <property type="taxonomic scope" value="Bacteria"/>
</dbReference>
<dbReference type="HOGENOM" id="CLU_033861_0_0_5"/>
<dbReference type="OrthoDB" id="9807458at2"/>
<dbReference type="UniPathway" id="UPA00159">
    <property type="reaction ID" value="UER00275"/>
</dbReference>
<dbReference type="Proteomes" id="UP000002586">
    <property type="component" value="Chromosome"/>
</dbReference>
<dbReference type="GO" id="GO:0005737">
    <property type="term" value="C:cytoplasm"/>
    <property type="evidence" value="ECO:0007669"/>
    <property type="project" value="UniProtKB-SubCell"/>
</dbReference>
<dbReference type="GO" id="GO:0005524">
    <property type="term" value="F:ATP binding"/>
    <property type="evidence" value="ECO:0007669"/>
    <property type="project" value="UniProtKB-KW"/>
</dbReference>
<dbReference type="GO" id="GO:0033862">
    <property type="term" value="F:UMP kinase activity"/>
    <property type="evidence" value="ECO:0007669"/>
    <property type="project" value="UniProtKB-EC"/>
</dbReference>
<dbReference type="GO" id="GO:0044210">
    <property type="term" value="P:'de novo' CTP biosynthetic process"/>
    <property type="evidence" value="ECO:0007669"/>
    <property type="project" value="UniProtKB-UniRule"/>
</dbReference>
<dbReference type="GO" id="GO:0006225">
    <property type="term" value="P:UDP biosynthetic process"/>
    <property type="evidence" value="ECO:0007669"/>
    <property type="project" value="TreeGrafter"/>
</dbReference>
<dbReference type="CDD" id="cd04254">
    <property type="entry name" value="AAK_UMPK-PyrH-Ec"/>
    <property type="match status" value="1"/>
</dbReference>
<dbReference type="FunFam" id="3.40.1160.10:FF:000001">
    <property type="entry name" value="Uridylate kinase"/>
    <property type="match status" value="1"/>
</dbReference>
<dbReference type="Gene3D" id="3.40.1160.10">
    <property type="entry name" value="Acetylglutamate kinase-like"/>
    <property type="match status" value="1"/>
</dbReference>
<dbReference type="HAMAP" id="MF_01220_B">
    <property type="entry name" value="PyrH_B"/>
    <property type="match status" value="1"/>
</dbReference>
<dbReference type="InterPro" id="IPR036393">
    <property type="entry name" value="AceGlu_kinase-like_sf"/>
</dbReference>
<dbReference type="InterPro" id="IPR001048">
    <property type="entry name" value="Asp/Glu/Uridylate_kinase"/>
</dbReference>
<dbReference type="InterPro" id="IPR001057">
    <property type="entry name" value="Glu/AcGlu_kinase"/>
</dbReference>
<dbReference type="InterPro" id="IPR011817">
    <property type="entry name" value="Uridylate_kinase"/>
</dbReference>
<dbReference type="InterPro" id="IPR015963">
    <property type="entry name" value="Uridylate_kinase_bac"/>
</dbReference>
<dbReference type="NCBIfam" id="TIGR02075">
    <property type="entry name" value="pyrH_bact"/>
    <property type="match status" value="1"/>
</dbReference>
<dbReference type="PANTHER" id="PTHR42833">
    <property type="entry name" value="URIDYLATE KINASE"/>
    <property type="match status" value="1"/>
</dbReference>
<dbReference type="PANTHER" id="PTHR42833:SF4">
    <property type="entry name" value="URIDYLATE KINASE PUMPKIN, CHLOROPLASTIC"/>
    <property type="match status" value="1"/>
</dbReference>
<dbReference type="Pfam" id="PF00696">
    <property type="entry name" value="AA_kinase"/>
    <property type="match status" value="1"/>
</dbReference>
<dbReference type="PIRSF" id="PIRSF005650">
    <property type="entry name" value="Uridylate_kin"/>
    <property type="match status" value="1"/>
</dbReference>
<dbReference type="PRINTS" id="PR00474">
    <property type="entry name" value="GLU5KINASE"/>
</dbReference>
<dbReference type="SUPFAM" id="SSF53633">
    <property type="entry name" value="Carbamate kinase-like"/>
    <property type="match status" value="1"/>
</dbReference>
<protein>
    <recommendedName>
        <fullName evidence="1">Uridylate kinase</fullName>
        <shortName evidence="1">UK</shortName>
        <ecNumber evidence="1">2.7.4.22</ecNumber>
    </recommendedName>
    <alternativeName>
        <fullName evidence="1">Uridine monophosphate kinase</fullName>
        <shortName evidence="1">UMP kinase</shortName>
        <shortName evidence="1">UMPK</shortName>
    </alternativeName>
</protein>